<name>COPB_PONAB</name>
<reference key="1">
    <citation type="submission" date="2004-11" db="EMBL/GenBank/DDBJ databases">
        <authorList>
            <consortium name="The German cDNA consortium"/>
        </authorList>
    </citation>
    <scope>NUCLEOTIDE SEQUENCE [LARGE SCALE MRNA]</scope>
    <source>
        <tissue>Brain cortex</tissue>
    </source>
</reference>
<accession>Q5R922</accession>
<comment type="function">
    <text evidence="1">The coatomer is a cytosolic protein complex that binds to dilysine motifs and reversibly associates with Golgi non-clathrin-coated vesicles, which further mediate biosynthetic protein transport from the ER, via the Golgi up to the trans Golgi network. Coatomer complex is required for budding from Golgi membranes, and is essential for the retrograde Golgi-to-ER transport of dilysine-tagged proteins. In mammals, the coatomer can only be recruited by membranes associated to ADP-ribosylation factors (ARFs), which are small GTP-binding proteins; the complex also influences the Golgi structural integrity, as well as the processing, activity, and endocytic recycling of LDL receptors. Plays a functional role in facilitating the transport of kappa-type opioid receptor mRNAs into axons and enhances translation of these proteins. Required for limiting lipid storage in lipid droplets. Involved in lipid homeostasis by regulating the presence of perilipin family members PLIN2 and PLIN3 at the lipid droplet surface and promoting the association of adipocyte surface triglyceride lipase (PNPLA2) with the lipid droplet to mediate lipolysis. Involved in the Golgi disassembly and reassembly processes during cell cycle. Involved in autophagy by playing a role in early endosome function. Plays a role in organellar compartmentalization of secretory compartments including endoplasmic reticulum (ER)-Golgi intermediate compartment (ERGIC), Golgi, trans-Golgi network (TGN) and recycling endosomes, and in biosynthetic transport of CAV1. Promotes degradation of Nef cellular targets CD4 and MHC class I antigens by facilitating their trafficking to degradative compartments (By similarity).</text>
</comment>
<comment type="subunit">
    <text evidence="2 3 4">Oligomeric complex that consists of at least the alpha, beta, beta', gamma, delta, epsilon and zeta subunits. Interacts (via C-terminus) with HIV-1 Nef; the interaction is direct. Interacts with CAPN8 and PRKCE. Interacts with SCYL1. Interacts with COPG1. Interacts with ARF1 (myristoylated); this interaction is required for binding of COPB1 to Golgi membranes. Interacts (via trunk domain) with ARF1 (via switch I region); the interaction is direct. Interacts with KCNK2 (via N-terminus); this interaction increases the channel-mediated whole cell currents and promotes plasma membrane expression of KCNK2. Interacts with anthrax lethal factor (LF); this interaction may facilitate endosomal vesicle membrane translocation of LF and its release from the lumen of endosomal vesicles to external milieu. Interacts with STX17. Interacts with TMEM115 (By similarity). Interacts with TMEM41B (By similarity).</text>
</comment>
<comment type="subcellular location">
    <subcellularLocation>
        <location evidence="1">Cytoplasm</location>
    </subcellularLocation>
    <subcellularLocation>
        <location evidence="1">Golgi apparatus membrane</location>
        <topology evidence="1">Peripheral membrane protein</topology>
        <orientation evidence="1">Cytoplasmic side</orientation>
    </subcellularLocation>
    <subcellularLocation>
        <location evidence="1">Cytoplasmic vesicle</location>
        <location evidence="1">COPI-coated vesicle membrane</location>
        <topology evidence="1">Peripheral membrane protein</topology>
        <orientation evidence="1">Cytoplasmic side</orientation>
    </subcellularLocation>
    <subcellularLocation>
        <location evidence="1">Cell membrane</location>
    </subcellularLocation>
    <subcellularLocation>
        <location evidence="1">Endoplasmic reticulum-Golgi intermediate compartment</location>
    </subcellularLocation>
    <text evidence="1">The coatomer is cytoplasmic or polymerized on the cytoplasmic side of the Golgi, as well as on the vesicles/buds originating from it. Proteolytic cleavage by CAPN8 triggers translocation from Golgi to cytoplasm. Found in perinuclear vesicular-tubular clusters (VTCs) and in the Golgi region where associated with vesicles, buds and rims of the Golgi stack. Occasionally present at the trans- side of Golgi, but mainly present at the cis-Golgi side in transitional areas (TA), on so-called peripheral elements (PE) consisting of tubules and vesicles located between the cup-shaped transitional elements (TE) of the rough endoplasmic reticulum (RER) and the cis-most Golgi cisternae. Present in cytoplasm, not associated with visible coats or membranes, with a minor fraction present on small clusters of tubules and vesicles. Some association with high-density and low-density microsomes and mitochondria/nuclei fraction. Very little found in plasma membrane fraction.</text>
</comment>
<comment type="miscellaneous">
    <text evidence="1">Brefeldin A induces dissociation from the Golgi of the beta-COP and presumably the other coatomer subunits.</text>
</comment>
<evidence type="ECO:0000250" key="1"/>
<evidence type="ECO:0000250" key="2">
    <source>
        <dbReference type="UniProtKB" id="P23514"/>
    </source>
</evidence>
<evidence type="ECO:0000250" key="3">
    <source>
        <dbReference type="UniProtKB" id="P53618"/>
    </source>
</evidence>
<evidence type="ECO:0000250" key="4">
    <source>
        <dbReference type="UniProtKB" id="Q9JIF7"/>
    </source>
</evidence>
<keyword id="KW-0007">Acetylation</keyword>
<keyword id="KW-1003">Cell membrane</keyword>
<keyword id="KW-0963">Cytoplasm</keyword>
<keyword id="KW-0968">Cytoplasmic vesicle</keyword>
<keyword id="KW-0931">ER-Golgi transport</keyword>
<keyword id="KW-0333">Golgi apparatus</keyword>
<keyword id="KW-0472">Membrane</keyword>
<keyword id="KW-0653">Protein transport</keyword>
<keyword id="KW-1185">Reference proteome</keyword>
<keyword id="KW-0677">Repeat</keyword>
<keyword id="KW-0813">Transport</keyword>
<feature type="initiator methionine" description="Removed" evidence="3">
    <location>
        <position position="1"/>
    </location>
</feature>
<feature type="chain" id="PRO_0000347229" description="Coatomer subunit beta">
    <location>
        <begin position="2"/>
        <end position="953"/>
    </location>
</feature>
<feature type="repeat" description="HEAT 1">
    <location>
        <begin position="96"/>
        <end position="131"/>
    </location>
</feature>
<feature type="repeat" description="HEAT 2">
    <location>
        <begin position="132"/>
        <end position="168"/>
    </location>
</feature>
<feature type="repeat" description="HEAT 3">
    <location>
        <begin position="240"/>
        <end position="276"/>
    </location>
</feature>
<feature type="repeat" description="HEAT 4">
    <location>
        <begin position="277"/>
        <end position="314"/>
    </location>
</feature>
<feature type="repeat" description="HEAT 5">
    <location>
        <begin position="316"/>
        <end position="353"/>
    </location>
</feature>
<feature type="repeat" description="HEAT 6">
    <location>
        <begin position="396"/>
        <end position="433"/>
    </location>
</feature>
<feature type="modified residue" description="N-acetylthreonine" evidence="3">
    <location>
        <position position="2"/>
    </location>
</feature>
<feature type="modified residue" description="N6-acetyllysine" evidence="4">
    <location>
        <position position="494"/>
    </location>
</feature>
<proteinExistence type="evidence at transcript level"/>
<sequence length="953" mass="107157">MTAAENVCYTLINVPMDSEPPSEISLKNDLEKGDVKSKTEALKKVIIMILNGEKLPGLLMTIIRFVLPLQDHTIKKLLLVFWEIVPKTTPDGRLLHEMILVCDAYRKDLQHPNEFIRGSTLRFLCKLKEAELLEPLMPAIRACLEHRHSYVRRNAVLAIYTIYRNFEHLIPDAPELIHDFLVDEKDASCKRNAFMMLIHADQDRALDYLSTCIDQVQTFGDILQLVIVELIYKACHANPSERARFIRCIYNLLQSSSPAVKYEAAGTLVTLSSAPTAIKAAAQCYIDLIIKESDNNVKLIVLDRLIELKEHPAHERVLQDLVMDILRVLSTPDLEVRKKTLQLALDLVSSRNVEELVIVLKKEVIKTNNVSEHEDTDKYRQLLVRTLHSCSVRFPDMAANVIPVLMEFLSDNNEAAAADVLEFVREAIQRFDNLRMLIVEKMLEVFHAIKSVKIYRGALWILGEYCSTKEDIQSVMTEIRRSLGEIPIVESEIKKEAGELKPEEEITVGPVQKLVTEMGTYATQSALSSSRPTKKEEDRPPLRGFLLDGDFFVAASLATTLTKIALRYVALVQEKKKQNSFVAEAMLLMATILHLGKSSLPKKPITDDDVDRISLCLKVLSECSPLMNDIFNKECRQSLSHMLSAKLEEEKLSQKKESEKRNVTVQPDDPISFMQLTAKNEMNCKEDQFQLSLLAAMGNTQRKEAADPLASKLNKVTQLTGFSDPVYAEAYVHVNQYDIVLDVLVVNQTSDTLQNCTLELATLGDLKLVEKPSPLTLAPHDFANIKANVKVASTENGIIFGNIVYDVSGAASDRNCVVLSDIHIDIMDYIQPATCTDAEFRQMWAEFEWENKVTVNTNMIDLNDYLRHILKSTNMKCLTPEKALSGYCGFMAANLYARSIFGEDALANVSIEKPIHQGPDAAVTGHIRIRAKSQGMALSLGDKINLSQKKTSI</sequence>
<organism>
    <name type="scientific">Pongo abelii</name>
    <name type="common">Sumatran orangutan</name>
    <name type="synonym">Pongo pygmaeus abelii</name>
    <dbReference type="NCBI Taxonomy" id="9601"/>
    <lineage>
        <taxon>Eukaryota</taxon>
        <taxon>Metazoa</taxon>
        <taxon>Chordata</taxon>
        <taxon>Craniata</taxon>
        <taxon>Vertebrata</taxon>
        <taxon>Euteleostomi</taxon>
        <taxon>Mammalia</taxon>
        <taxon>Eutheria</taxon>
        <taxon>Euarchontoglires</taxon>
        <taxon>Primates</taxon>
        <taxon>Haplorrhini</taxon>
        <taxon>Catarrhini</taxon>
        <taxon>Hominidae</taxon>
        <taxon>Pongo</taxon>
    </lineage>
</organism>
<protein>
    <recommendedName>
        <fullName>Coatomer subunit beta</fullName>
    </recommendedName>
    <alternativeName>
        <fullName>Beta-coat protein</fullName>
        <shortName>Beta-COP</shortName>
    </alternativeName>
</protein>
<dbReference type="EMBL" id="CR859574">
    <property type="protein sequence ID" value="CAH91738.1"/>
    <property type="molecule type" value="mRNA"/>
</dbReference>
<dbReference type="SMR" id="Q5R922"/>
<dbReference type="STRING" id="9601.ENSPPYP00000003980"/>
<dbReference type="eggNOG" id="KOG1058">
    <property type="taxonomic scope" value="Eukaryota"/>
</dbReference>
<dbReference type="InParanoid" id="Q5R922"/>
<dbReference type="Proteomes" id="UP000001595">
    <property type="component" value="Unplaced"/>
</dbReference>
<dbReference type="GO" id="GO:0030126">
    <property type="term" value="C:COPI vesicle coat"/>
    <property type="evidence" value="ECO:0007669"/>
    <property type="project" value="InterPro"/>
</dbReference>
<dbReference type="GO" id="GO:0005793">
    <property type="term" value="C:endoplasmic reticulum-Golgi intermediate compartment"/>
    <property type="evidence" value="ECO:0007669"/>
    <property type="project" value="UniProtKB-SubCell"/>
</dbReference>
<dbReference type="GO" id="GO:0000139">
    <property type="term" value="C:Golgi membrane"/>
    <property type="evidence" value="ECO:0007669"/>
    <property type="project" value="UniProtKB-SubCell"/>
</dbReference>
<dbReference type="GO" id="GO:0005886">
    <property type="term" value="C:plasma membrane"/>
    <property type="evidence" value="ECO:0007669"/>
    <property type="project" value="UniProtKB-SubCell"/>
</dbReference>
<dbReference type="GO" id="GO:0005198">
    <property type="term" value="F:structural molecule activity"/>
    <property type="evidence" value="ECO:0007669"/>
    <property type="project" value="InterPro"/>
</dbReference>
<dbReference type="GO" id="GO:0006888">
    <property type="term" value="P:endoplasmic reticulum to Golgi vesicle-mediated transport"/>
    <property type="evidence" value="ECO:0007669"/>
    <property type="project" value="TreeGrafter"/>
</dbReference>
<dbReference type="GO" id="GO:0006891">
    <property type="term" value="P:intra-Golgi vesicle-mediated transport"/>
    <property type="evidence" value="ECO:0007669"/>
    <property type="project" value="TreeGrafter"/>
</dbReference>
<dbReference type="GO" id="GO:0006886">
    <property type="term" value="P:intracellular protein transport"/>
    <property type="evidence" value="ECO:0007669"/>
    <property type="project" value="InterPro"/>
</dbReference>
<dbReference type="Gene3D" id="1.25.10.10">
    <property type="entry name" value="Leucine-rich Repeat Variant"/>
    <property type="match status" value="1"/>
</dbReference>
<dbReference type="InterPro" id="IPR011989">
    <property type="entry name" value="ARM-like"/>
</dbReference>
<dbReference type="InterPro" id="IPR016024">
    <property type="entry name" value="ARM-type_fold"/>
</dbReference>
<dbReference type="InterPro" id="IPR002553">
    <property type="entry name" value="Clathrin/coatomer_adapt-like_N"/>
</dbReference>
<dbReference type="InterPro" id="IPR011710">
    <property type="entry name" value="Coatomer_bsu_C"/>
</dbReference>
<dbReference type="InterPro" id="IPR016460">
    <property type="entry name" value="COPB1"/>
</dbReference>
<dbReference type="InterPro" id="IPR029446">
    <property type="entry name" value="COPB1_appendage_platform_dom"/>
</dbReference>
<dbReference type="PANTHER" id="PTHR10635">
    <property type="entry name" value="COATOMER SUBUNIT BETA"/>
    <property type="match status" value="1"/>
</dbReference>
<dbReference type="PANTHER" id="PTHR10635:SF0">
    <property type="entry name" value="COATOMER SUBUNIT BETA"/>
    <property type="match status" value="1"/>
</dbReference>
<dbReference type="Pfam" id="PF01602">
    <property type="entry name" value="Adaptin_N"/>
    <property type="match status" value="1"/>
</dbReference>
<dbReference type="Pfam" id="PF07718">
    <property type="entry name" value="Coatamer_beta_C"/>
    <property type="match status" value="1"/>
</dbReference>
<dbReference type="Pfam" id="PF14806">
    <property type="entry name" value="Coatomer_b_Cpla"/>
    <property type="match status" value="1"/>
</dbReference>
<dbReference type="PIRSF" id="PIRSF005727">
    <property type="entry name" value="Coatomer_beta_subunit"/>
    <property type="match status" value="1"/>
</dbReference>
<dbReference type="SUPFAM" id="SSF48371">
    <property type="entry name" value="ARM repeat"/>
    <property type="match status" value="1"/>
</dbReference>
<gene>
    <name type="primary">COPB1</name>
    <name type="synonym">COPB</name>
</gene>